<organism>
    <name type="scientific">Aspergillus fumigatus (strain CBS 144.89 / FGSC A1163 / CEA10)</name>
    <name type="common">Neosartorya fumigata</name>
    <dbReference type="NCBI Taxonomy" id="451804"/>
    <lineage>
        <taxon>Eukaryota</taxon>
        <taxon>Fungi</taxon>
        <taxon>Dikarya</taxon>
        <taxon>Ascomycota</taxon>
        <taxon>Pezizomycotina</taxon>
        <taxon>Eurotiomycetes</taxon>
        <taxon>Eurotiomycetidae</taxon>
        <taxon>Eurotiales</taxon>
        <taxon>Aspergillaceae</taxon>
        <taxon>Aspergillus</taxon>
        <taxon>Aspergillus subgen. Fumigati</taxon>
    </lineage>
</organism>
<accession>B0Y9Z9</accession>
<proteinExistence type="inferred from homology"/>
<protein>
    <recommendedName>
        <fullName evidence="1">3-hydroxyanthranilate 3,4-dioxygenase 1</fullName>
        <ecNumber evidence="1">1.13.11.6</ecNumber>
    </recommendedName>
    <alternativeName>
        <fullName evidence="1">3-hydroxyanthranilate oxygenase 1</fullName>
        <shortName evidence="1">3-HAO-1</shortName>
    </alternativeName>
    <alternativeName>
        <fullName evidence="1">3-hydroxyanthranilic acid dioxygenase 1</fullName>
        <shortName evidence="1">HAD-1</shortName>
    </alternativeName>
    <alternativeName>
        <fullName evidence="1">Biosynthesis of nicotinic acid protein 1-1</fullName>
    </alternativeName>
</protein>
<name>3HAO1_ASPFC</name>
<gene>
    <name type="primary">bna1-1</name>
    <name type="ORF">AFUB_082850</name>
</gene>
<feature type="chain" id="PRO_0000361976" description="3-hydroxyanthranilate 3,4-dioxygenase 1">
    <location>
        <begin position="1"/>
        <end position="192"/>
    </location>
</feature>
<feature type="binding site" evidence="1">
    <location>
        <position position="50"/>
    </location>
    <ligand>
        <name>O2</name>
        <dbReference type="ChEBI" id="CHEBI:15379"/>
    </ligand>
</feature>
<feature type="binding site" evidence="1">
    <location>
        <position position="54"/>
    </location>
    <ligand>
        <name>Fe cation</name>
        <dbReference type="ChEBI" id="CHEBI:24875"/>
        <note>catalytic</note>
    </ligand>
</feature>
<feature type="binding site" evidence="1">
    <location>
        <position position="60"/>
    </location>
    <ligand>
        <name>Fe cation</name>
        <dbReference type="ChEBI" id="CHEBI:24875"/>
        <note>catalytic</note>
    </ligand>
</feature>
<feature type="binding site" evidence="1">
    <location>
        <position position="60"/>
    </location>
    <ligand>
        <name>substrate</name>
    </ligand>
</feature>
<feature type="binding site" evidence="1">
    <location>
        <position position="102"/>
    </location>
    <ligand>
        <name>Fe cation</name>
        <dbReference type="ChEBI" id="CHEBI:24875"/>
        <note>catalytic</note>
    </ligand>
</feature>
<feature type="binding site" evidence="1">
    <location>
        <position position="106"/>
    </location>
    <ligand>
        <name>substrate</name>
    </ligand>
</feature>
<feature type="binding site" evidence="1">
    <location>
        <position position="116"/>
    </location>
    <ligand>
        <name>substrate</name>
    </ligand>
</feature>
<feature type="binding site" evidence="1">
    <location>
        <position position="131"/>
    </location>
    <ligand>
        <name>a divalent metal cation</name>
        <dbReference type="ChEBI" id="CHEBI:60240"/>
    </ligand>
</feature>
<feature type="binding site" evidence="1">
    <location>
        <position position="134"/>
    </location>
    <ligand>
        <name>a divalent metal cation</name>
        <dbReference type="ChEBI" id="CHEBI:60240"/>
    </ligand>
</feature>
<feature type="binding site" evidence="1">
    <location>
        <position position="168"/>
    </location>
    <ligand>
        <name>a divalent metal cation</name>
        <dbReference type="ChEBI" id="CHEBI:60240"/>
    </ligand>
</feature>
<feature type="binding site" evidence="1">
    <location>
        <position position="171"/>
    </location>
    <ligand>
        <name>a divalent metal cation</name>
        <dbReference type="ChEBI" id="CHEBI:60240"/>
    </ligand>
</feature>
<dbReference type="EC" id="1.13.11.6" evidence="1"/>
<dbReference type="EMBL" id="DS499600">
    <property type="protein sequence ID" value="EDP48842.1"/>
    <property type="molecule type" value="Genomic_DNA"/>
</dbReference>
<dbReference type="SMR" id="B0Y9Z9"/>
<dbReference type="EnsemblFungi" id="EDP48842">
    <property type="protein sequence ID" value="EDP48842"/>
    <property type="gene ID" value="AFUB_082850"/>
</dbReference>
<dbReference type="VEuPathDB" id="FungiDB:AFUB_082850"/>
<dbReference type="HOGENOM" id="CLU_095765_0_0_1"/>
<dbReference type="OrthoDB" id="6316at5052"/>
<dbReference type="PhylomeDB" id="B0Y9Z9"/>
<dbReference type="UniPathway" id="UPA00253">
    <property type="reaction ID" value="UER00330"/>
</dbReference>
<dbReference type="Proteomes" id="UP000001699">
    <property type="component" value="Unassembled WGS sequence"/>
</dbReference>
<dbReference type="GO" id="GO:0005737">
    <property type="term" value="C:cytoplasm"/>
    <property type="evidence" value="ECO:0007669"/>
    <property type="project" value="UniProtKB-SubCell"/>
</dbReference>
<dbReference type="GO" id="GO:0000334">
    <property type="term" value="F:3-hydroxyanthranilate 3,4-dioxygenase activity"/>
    <property type="evidence" value="ECO:0007669"/>
    <property type="project" value="UniProtKB-UniRule"/>
</dbReference>
<dbReference type="GO" id="GO:0008198">
    <property type="term" value="F:ferrous iron binding"/>
    <property type="evidence" value="ECO:0007669"/>
    <property type="project" value="UniProtKB-UniRule"/>
</dbReference>
<dbReference type="GO" id="GO:0034354">
    <property type="term" value="P:'de novo' NAD biosynthetic process from L-tryptophan"/>
    <property type="evidence" value="ECO:0007669"/>
    <property type="project" value="UniProtKB-UniRule"/>
</dbReference>
<dbReference type="GO" id="GO:0043420">
    <property type="term" value="P:anthranilate metabolic process"/>
    <property type="evidence" value="ECO:0007669"/>
    <property type="project" value="UniProtKB-UniRule"/>
</dbReference>
<dbReference type="GO" id="GO:0006569">
    <property type="term" value="P:L-tryptophan catabolic process"/>
    <property type="evidence" value="ECO:0007669"/>
    <property type="project" value="UniProtKB-UniRule"/>
</dbReference>
<dbReference type="GO" id="GO:0019805">
    <property type="term" value="P:quinolinate biosynthetic process"/>
    <property type="evidence" value="ECO:0007669"/>
    <property type="project" value="UniProtKB-UniRule"/>
</dbReference>
<dbReference type="CDD" id="cd06123">
    <property type="entry name" value="cupin_HAO"/>
    <property type="match status" value="1"/>
</dbReference>
<dbReference type="FunFam" id="2.60.120.10:FF:000093">
    <property type="entry name" value="3-hydroxyanthranilate 3,4-dioxygenase"/>
    <property type="match status" value="1"/>
</dbReference>
<dbReference type="Gene3D" id="2.60.120.10">
    <property type="entry name" value="Jelly Rolls"/>
    <property type="match status" value="1"/>
</dbReference>
<dbReference type="HAMAP" id="MF_00825">
    <property type="entry name" value="3_HAO"/>
    <property type="match status" value="1"/>
</dbReference>
<dbReference type="InterPro" id="IPR010329">
    <property type="entry name" value="3hydroanth_dOase"/>
</dbReference>
<dbReference type="InterPro" id="IPR014710">
    <property type="entry name" value="RmlC-like_jellyroll"/>
</dbReference>
<dbReference type="InterPro" id="IPR011051">
    <property type="entry name" value="RmlC_Cupin_sf"/>
</dbReference>
<dbReference type="NCBIfam" id="TIGR03037">
    <property type="entry name" value="anthran_nbaC"/>
    <property type="match status" value="1"/>
</dbReference>
<dbReference type="PANTHER" id="PTHR15497">
    <property type="entry name" value="3-HYDROXYANTHRANILATE 3,4-DIOXYGENASE"/>
    <property type="match status" value="1"/>
</dbReference>
<dbReference type="PANTHER" id="PTHR15497:SF1">
    <property type="entry name" value="3-HYDROXYANTHRANILATE 3,4-DIOXYGENASE"/>
    <property type="match status" value="1"/>
</dbReference>
<dbReference type="Pfam" id="PF06052">
    <property type="entry name" value="3-HAO"/>
    <property type="match status" value="1"/>
</dbReference>
<dbReference type="SUPFAM" id="SSF51182">
    <property type="entry name" value="RmlC-like cupins"/>
    <property type="match status" value="1"/>
</dbReference>
<reference key="1">
    <citation type="journal article" date="2008" name="PLoS Genet.">
        <title>Genomic islands in the pathogenic filamentous fungus Aspergillus fumigatus.</title>
        <authorList>
            <person name="Fedorova N.D."/>
            <person name="Khaldi N."/>
            <person name="Joardar V.S."/>
            <person name="Maiti R."/>
            <person name="Amedeo P."/>
            <person name="Anderson M.J."/>
            <person name="Crabtree J."/>
            <person name="Silva J.C."/>
            <person name="Badger J.H."/>
            <person name="Albarraq A."/>
            <person name="Angiuoli S."/>
            <person name="Bussey H."/>
            <person name="Bowyer P."/>
            <person name="Cotty P.J."/>
            <person name="Dyer P.S."/>
            <person name="Egan A."/>
            <person name="Galens K."/>
            <person name="Fraser-Liggett C.M."/>
            <person name="Haas B.J."/>
            <person name="Inman J.M."/>
            <person name="Kent R."/>
            <person name="Lemieux S."/>
            <person name="Malavazi I."/>
            <person name="Orvis J."/>
            <person name="Roemer T."/>
            <person name="Ronning C.M."/>
            <person name="Sundaram J.P."/>
            <person name="Sutton G."/>
            <person name="Turner G."/>
            <person name="Venter J.C."/>
            <person name="White O.R."/>
            <person name="Whitty B.R."/>
            <person name="Youngman P."/>
            <person name="Wolfe K.H."/>
            <person name="Goldman G.H."/>
            <person name="Wortman J.R."/>
            <person name="Jiang B."/>
            <person name="Denning D.W."/>
            <person name="Nierman W.C."/>
        </authorList>
    </citation>
    <scope>NUCLEOTIDE SEQUENCE [LARGE SCALE GENOMIC DNA]</scope>
    <source>
        <strain>CBS 144.89 / FGSC A1163 / CEA10</strain>
    </source>
</reference>
<keyword id="KW-0963">Cytoplasm</keyword>
<keyword id="KW-0223">Dioxygenase</keyword>
<keyword id="KW-0408">Iron</keyword>
<keyword id="KW-0479">Metal-binding</keyword>
<keyword id="KW-0560">Oxidoreductase</keyword>
<keyword id="KW-0662">Pyridine nucleotide biosynthesis</keyword>
<sequence>MLPPALNIPKWLEENSHLLQPPVNNYCVYHPSSPATAGYTVMIVGGPNARTDYHINTTPEFFYQYRGSMLLKTVDTSVSPPVFQDIPIHEGSIFLLPANTPHCPVRFKDTVGVVMEQPRPKDAVDTMLWFCKKCGEVVWEKRFVCTDLGTQVKEVVEEFAADQEKRTCKACGTIAETRYQEGEVVQPPRFLE</sequence>
<evidence type="ECO:0000255" key="1">
    <source>
        <dbReference type="HAMAP-Rule" id="MF_03019"/>
    </source>
</evidence>
<comment type="function">
    <text evidence="1">Catalyzes the oxidative ring opening of 3-hydroxyanthranilate to 2-amino-3-carboxymuconate semialdehyde, which spontaneously cyclizes to quinolinate.</text>
</comment>
<comment type="catalytic activity">
    <reaction evidence="1">
        <text>3-hydroxyanthranilate + O2 = (2Z,4Z)-2-amino-3-carboxymuconate 6-semialdehyde</text>
        <dbReference type="Rhea" id="RHEA:17953"/>
        <dbReference type="ChEBI" id="CHEBI:15379"/>
        <dbReference type="ChEBI" id="CHEBI:36559"/>
        <dbReference type="ChEBI" id="CHEBI:77612"/>
        <dbReference type="EC" id="1.13.11.6"/>
    </reaction>
</comment>
<comment type="cofactor">
    <cofactor evidence="1">
        <name>Fe(2+)</name>
        <dbReference type="ChEBI" id="CHEBI:29033"/>
    </cofactor>
</comment>
<comment type="pathway">
    <text evidence="1">Cofactor biosynthesis; NAD(+) biosynthesis; quinolinate from L-kynurenine: step 3/3.</text>
</comment>
<comment type="subcellular location">
    <subcellularLocation>
        <location evidence="1">Cytoplasm</location>
    </subcellularLocation>
</comment>
<comment type="similarity">
    <text evidence="1">Belongs to the 3-HAO family.</text>
</comment>